<evidence type="ECO:0000255" key="1">
    <source>
        <dbReference type="HAMAP-Rule" id="MF_00598"/>
    </source>
</evidence>
<feature type="chain" id="PRO_1000129882" description="Protein Smg homolog">
    <location>
        <begin position="1"/>
        <end position="158"/>
    </location>
</feature>
<dbReference type="EMBL" id="CP001103">
    <property type="protein sequence ID" value="AEA96173.1"/>
    <property type="molecule type" value="Genomic_DNA"/>
</dbReference>
<dbReference type="RefSeq" id="WP_012516547.1">
    <property type="nucleotide sequence ID" value="NC_011138.3"/>
</dbReference>
<dbReference type="SMR" id="B4S294"/>
<dbReference type="KEGG" id="amc:MADE_1000120"/>
<dbReference type="HOGENOM" id="CLU_133242_0_0_6"/>
<dbReference type="Proteomes" id="UP000001870">
    <property type="component" value="Chromosome"/>
</dbReference>
<dbReference type="HAMAP" id="MF_00598">
    <property type="entry name" value="Smg"/>
    <property type="match status" value="1"/>
</dbReference>
<dbReference type="InterPro" id="IPR007456">
    <property type="entry name" value="Smg"/>
</dbReference>
<dbReference type="NCBIfam" id="NF002897">
    <property type="entry name" value="PRK03430.1"/>
    <property type="match status" value="1"/>
</dbReference>
<dbReference type="PANTHER" id="PTHR38692">
    <property type="entry name" value="PROTEIN SMG"/>
    <property type="match status" value="1"/>
</dbReference>
<dbReference type="PANTHER" id="PTHR38692:SF1">
    <property type="entry name" value="PROTEIN SMG"/>
    <property type="match status" value="1"/>
</dbReference>
<dbReference type="Pfam" id="PF04361">
    <property type="entry name" value="DUF494"/>
    <property type="match status" value="1"/>
</dbReference>
<protein>
    <recommendedName>
        <fullName evidence="1">Protein Smg homolog</fullName>
    </recommendedName>
</protein>
<comment type="similarity">
    <text evidence="1">Belongs to the Smg family.</text>
</comment>
<accession>B4S294</accession>
<accession>F2G1S6</accession>
<gene>
    <name evidence="1" type="primary">smg</name>
    <name type="ordered locus">MADE_1000120</name>
</gene>
<proteinExistence type="inferred from homology"/>
<reference key="1">
    <citation type="journal article" date="2008" name="ISME J.">
        <title>Comparative genomics of two ecotypes of the marine planktonic copiotroph Alteromonas macleodii suggests alternative lifestyles associated with different kinds of particulate organic matter.</title>
        <authorList>
            <person name="Ivars-Martinez E."/>
            <person name="Martin-Cuadrado A.-B."/>
            <person name="D'Auria G."/>
            <person name="Mira A."/>
            <person name="Ferriera S."/>
            <person name="Johnson J."/>
            <person name="Friedman R."/>
            <person name="Rodriguez-Valera F."/>
        </authorList>
    </citation>
    <scope>NUCLEOTIDE SEQUENCE [LARGE SCALE GENOMIC DNA]</scope>
    <source>
        <strain>DSM 17117 / CIP 110805 / LMG 28347 / Deep ecotype</strain>
    </source>
</reference>
<name>SMG_ALTMD</name>
<organism>
    <name type="scientific">Alteromonas mediterranea (strain DSM 17117 / CIP 110805 / LMG 28347 / Deep ecotype)</name>
    <dbReference type="NCBI Taxonomy" id="1774373"/>
    <lineage>
        <taxon>Bacteria</taxon>
        <taxon>Pseudomonadati</taxon>
        <taxon>Pseudomonadota</taxon>
        <taxon>Gammaproteobacteria</taxon>
        <taxon>Alteromonadales</taxon>
        <taxon>Alteromonadaceae</taxon>
        <taxon>Alteromonas/Salinimonas group</taxon>
        <taxon>Alteromonas</taxon>
    </lineage>
</organism>
<sequence length="158" mass="18635">MFDILMYLFENFIHSETEIRVDQDELTEELVRAGFHHDEIYKALAWLEKLAALQETDIKPYFCKGISTSLSRIYTHEEQMRLDVECRGFLMFLEQVNVLDASTREMVIDRVMEIDSSEFCLEDLKWVVLMVLFNVPGKEKAYAQMEDLLFEEPDGILH</sequence>